<reference key="1">
    <citation type="submission" date="2004-11" db="EMBL/GenBank/DDBJ databases">
        <authorList>
            <consortium name="The German cDNA consortium"/>
        </authorList>
    </citation>
    <scope>NUCLEOTIDE SEQUENCE [LARGE SCALE MRNA]</scope>
    <source>
        <tissue>Heart</tissue>
    </source>
</reference>
<organism>
    <name type="scientific">Pongo abelii</name>
    <name type="common">Sumatran orangutan</name>
    <name type="synonym">Pongo pygmaeus abelii</name>
    <dbReference type="NCBI Taxonomy" id="9601"/>
    <lineage>
        <taxon>Eukaryota</taxon>
        <taxon>Metazoa</taxon>
        <taxon>Chordata</taxon>
        <taxon>Craniata</taxon>
        <taxon>Vertebrata</taxon>
        <taxon>Euteleostomi</taxon>
        <taxon>Mammalia</taxon>
        <taxon>Eutheria</taxon>
        <taxon>Euarchontoglires</taxon>
        <taxon>Primates</taxon>
        <taxon>Haplorrhini</taxon>
        <taxon>Catarrhini</taxon>
        <taxon>Hominidae</taxon>
        <taxon>Pongo</taxon>
    </lineage>
</organism>
<keyword id="KW-0156">Chromatin regulator</keyword>
<keyword id="KW-0963">Cytoplasm</keyword>
<keyword id="KW-0479">Metal-binding</keyword>
<keyword id="KW-0539">Nucleus</keyword>
<keyword id="KW-0656">Proto-oncogene</keyword>
<keyword id="KW-1185">Reference proteome</keyword>
<keyword id="KW-0678">Repressor</keyword>
<keyword id="KW-0804">Transcription</keyword>
<keyword id="KW-0805">Transcription regulation</keyword>
<keyword id="KW-0832">Ubl conjugation</keyword>
<keyword id="KW-0862">Zinc</keyword>
<keyword id="KW-0863">Zinc-finger</keyword>
<proteinExistence type="evidence at transcript level"/>
<name>BMI1_PONAB</name>
<sequence>MHRTTRIKITELNPHLMCVLCGGYFIDATTIIECLHSFCKTCIVRYLETSKYCPICDVQVHKTRPLLNIRSDKTLQDIVYKLVPGLFKNEMKRRRDFYAAHPSADAANGSNEDRGEVADEDKRIITDDEIISLSIEFFDQNRLDRKVNKDKEKSKEEVNDKRYLRCPAAMTVMHLRKFLRSKMDIPNTFQIDVMYEEEPLKDYYTLMDIAYIYTWRRNGPLPLKYRVRPTCKRMKISHQRDGLTNAGELESDSGSDKANSPAGGIPSTSSCLPSPSTPVQSPHPQFPHISSTMNGTSNSPSGNHQSSFANRPRKSSVNGSSATSSG</sequence>
<evidence type="ECO:0000250" key="1"/>
<evidence type="ECO:0000250" key="2">
    <source>
        <dbReference type="UniProtKB" id="P25916"/>
    </source>
</evidence>
<evidence type="ECO:0000250" key="3">
    <source>
        <dbReference type="UniProtKB" id="P35226"/>
    </source>
</evidence>
<evidence type="ECO:0000255" key="4"/>
<evidence type="ECO:0000255" key="5">
    <source>
        <dbReference type="PROSITE-ProRule" id="PRU00175"/>
    </source>
</evidence>
<evidence type="ECO:0000256" key="6">
    <source>
        <dbReference type="SAM" id="MobiDB-lite"/>
    </source>
</evidence>
<protein>
    <recommendedName>
        <fullName>Polycomb complex protein BMI-1</fullName>
    </recommendedName>
    <alternativeName>
        <fullName>Polycomb group RING finger protein 4</fullName>
    </alternativeName>
</protein>
<comment type="function">
    <text evidence="3">Component of a Polycomb group (PcG) multiprotein PRC1-like complex, a complex class required to maintain the transcriptionally repressive state of many genes, including Hox genes, throughout development. PcG PRC1 complex acts via chromatin remodeling and modification of histones; it mediates monoubiquitination of histone H2A 'Lys-119', rendering chromatin heritably changed in its expressibility. The complex composed of RNF2, UB2D3 and BMI1 binds nucleosomes, and has activity only with nucleosomal histone H2A. In the PRC1-like complex, regulates the E3 ubiquitin-protein ligase activity of RNF2/RING2.</text>
</comment>
<comment type="subunit">
    <text evidence="2 3">Component of a PRC1-like complex. Identified in a PRC1-like HPRC-H complex with CBX2, CBX4, CBX8, PHC1, PHC2, PHC3 RING1 and RNF2. Interacts with RNF2/RING2 (By similarity). Interacts with RING1 (By similarity). Part of a complex that contains RNF2, UB2D3 and BMI1, where RNF2 and BMI1 form a tight heterodimer, and UB2D3 interacts only with RNF2. The complex composed of RNF2, UB2D3 and BMI1 binds nucleosomes, and has activity only with nucleosomal histone H2A. Interacts with CBX7 and CBX8. Interacts with SPOP. Part of a complex consisting of BMI1, CUL3 and SPOP. Interacts with E4F1. Interacts with PHC2 (By similarity). Interacts with zinc finger protein ZNF277 (By similarity). May be part of a complex including at least ZNF277, BMI1 and RNF2/RING2 (By similarity).</text>
</comment>
<comment type="subcellular location">
    <subcellularLocation>
        <location evidence="3">Nucleus</location>
    </subcellularLocation>
    <subcellularLocation>
        <location evidence="3">Cytoplasm</location>
    </subcellularLocation>
</comment>
<comment type="induction">
    <text evidence="2">Down-regulated by oxidative stress.</text>
</comment>
<comment type="PTM">
    <text evidence="1">May be polyubiquitinated; which does not lead to proteasomal degradation. Monoubiquitinated.</text>
</comment>
<dbReference type="EMBL" id="CR859740">
    <property type="protein sequence ID" value="CAH91898.1"/>
    <property type="molecule type" value="mRNA"/>
</dbReference>
<dbReference type="RefSeq" id="NP_001126098.1">
    <property type="nucleotide sequence ID" value="NM_001132626.1"/>
</dbReference>
<dbReference type="RefSeq" id="XP_024108839.1">
    <property type="nucleotide sequence ID" value="XM_024253071.3"/>
</dbReference>
<dbReference type="RefSeq" id="XP_024108840.1">
    <property type="nucleotide sequence ID" value="XM_024253072.3"/>
</dbReference>
<dbReference type="RefSeq" id="XP_024108841.1">
    <property type="nucleotide sequence ID" value="XM_024253073.3"/>
</dbReference>
<dbReference type="RefSeq" id="XP_054377569.1">
    <property type="nucleotide sequence ID" value="XM_054521594.2"/>
</dbReference>
<dbReference type="RefSeq" id="XP_054377571.1">
    <property type="nucleotide sequence ID" value="XM_054521596.2"/>
</dbReference>
<dbReference type="SMR" id="Q5R8L2"/>
<dbReference type="FunCoup" id="Q5R8L2">
    <property type="interactions" value="2895"/>
</dbReference>
<dbReference type="STRING" id="9601.ENSPPYP00000002492"/>
<dbReference type="Ensembl" id="ENSPPYT00000002567.3">
    <property type="protein sequence ID" value="ENSPPYP00000002492.2"/>
    <property type="gene ID" value="ENSPPYG00000002144.3"/>
</dbReference>
<dbReference type="GeneID" id="100173052"/>
<dbReference type="KEGG" id="pon:100173052"/>
<dbReference type="CTD" id="648"/>
<dbReference type="eggNOG" id="KOG2660">
    <property type="taxonomic scope" value="Eukaryota"/>
</dbReference>
<dbReference type="GeneTree" id="ENSGT00940000156042"/>
<dbReference type="HOGENOM" id="CLU_046427_0_0_1"/>
<dbReference type="InParanoid" id="Q5R8L2"/>
<dbReference type="OrthoDB" id="1305878at2759"/>
<dbReference type="TreeFam" id="TF324206"/>
<dbReference type="Proteomes" id="UP000001595">
    <property type="component" value="Chromosome 10"/>
</dbReference>
<dbReference type="GO" id="GO:0005737">
    <property type="term" value="C:cytoplasm"/>
    <property type="evidence" value="ECO:0007669"/>
    <property type="project" value="UniProtKB-SubCell"/>
</dbReference>
<dbReference type="GO" id="GO:0031519">
    <property type="term" value="C:PcG protein complex"/>
    <property type="evidence" value="ECO:0000250"/>
    <property type="project" value="UniProtKB"/>
</dbReference>
<dbReference type="GO" id="GO:0035102">
    <property type="term" value="C:PRC1 complex"/>
    <property type="evidence" value="ECO:0007669"/>
    <property type="project" value="TreeGrafter"/>
</dbReference>
<dbReference type="GO" id="GO:0000151">
    <property type="term" value="C:ubiquitin ligase complex"/>
    <property type="evidence" value="ECO:0000250"/>
    <property type="project" value="UniProtKB"/>
</dbReference>
<dbReference type="GO" id="GO:1990841">
    <property type="term" value="F:promoter-specific chromatin binding"/>
    <property type="evidence" value="ECO:0000250"/>
    <property type="project" value="UniProtKB"/>
</dbReference>
<dbReference type="GO" id="GO:0008270">
    <property type="term" value="F:zinc ion binding"/>
    <property type="evidence" value="ECO:0000250"/>
    <property type="project" value="UniProtKB"/>
</dbReference>
<dbReference type="GO" id="GO:0006338">
    <property type="term" value="P:chromatin remodeling"/>
    <property type="evidence" value="ECO:0000250"/>
    <property type="project" value="UniProtKB"/>
</dbReference>
<dbReference type="GO" id="GO:0045814">
    <property type="term" value="P:negative regulation of gene expression, epigenetic"/>
    <property type="evidence" value="ECO:0000250"/>
    <property type="project" value="UniProtKB"/>
</dbReference>
<dbReference type="GO" id="GO:0000122">
    <property type="term" value="P:negative regulation of transcription by RNA polymerase II"/>
    <property type="evidence" value="ECO:0007669"/>
    <property type="project" value="TreeGrafter"/>
</dbReference>
<dbReference type="GO" id="GO:0051443">
    <property type="term" value="P:positive regulation of ubiquitin-protein transferase activity"/>
    <property type="evidence" value="ECO:0000250"/>
    <property type="project" value="UniProtKB"/>
</dbReference>
<dbReference type="CDD" id="cd17165">
    <property type="entry name" value="RAWUL_PCGF4"/>
    <property type="match status" value="1"/>
</dbReference>
<dbReference type="CDD" id="cd16736">
    <property type="entry name" value="RING-HC_PCGF4"/>
    <property type="match status" value="1"/>
</dbReference>
<dbReference type="FunFam" id="3.10.20.90:FF:000106">
    <property type="entry name" value="Polycomb complex protein BMI-1"/>
    <property type="match status" value="1"/>
</dbReference>
<dbReference type="FunFam" id="3.30.40.10:FF:000082">
    <property type="entry name" value="Polycomb group ring finger 2"/>
    <property type="match status" value="1"/>
</dbReference>
<dbReference type="Gene3D" id="3.10.20.90">
    <property type="entry name" value="Phosphatidylinositol 3-kinase Catalytic Subunit, Chain A, domain 1"/>
    <property type="match status" value="1"/>
</dbReference>
<dbReference type="Gene3D" id="3.30.40.10">
    <property type="entry name" value="Zinc/RING finger domain, C3HC4 (zinc finger)"/>
    <property type="match status" value="1"/>
</dbReference>
<dbReference type="InterPro" id="IPR032443">
    <property type="entry name" value="RAWUL"/>
</dbReference>
<dbReference type="InterPro" id="IPR001841">
    <property type="entry name" value="Znf_RING"/>
</dbReference>
<dbReference type="InterPro" id="IPR013083">
    <property type="entry name" value="Znf_RING/FYVE/PHD"/>
</dbReference>
<dbReference type="InterPro" id="IPR017907">
    <property type="entry name" value="Znf_RING_CS"/>
</dbReference>
<dbReference type="PANTHER" id="PTHR10825:SF21">
    <property type="entry name" value="POLYCOMB COMPLEX PROTEIN BMI-1"/>
    <property type="match status" value="1"/>
</dbReference>
<dbReference type="PANTHER" id="PTHR10825">
    <property type="entry name" value="RING FINGER DOMAIN-CONTAINING, POLYCOMB GROUP COMPONENT"/>
    <property type="match status" value="1"/>
</dbReference>
<dbReference type="Pfam" id="PF16207">
    <property type="entry name" value="RAWUL"/>
    <property type="match status" value="1"/>
</dbReference>
<dbReference type="Pfam" id="PF13923">
    <property type="entry name" value="zf-C3HC4_2"/>
    <property type="match status" value="1"/>
</dbReference>
<dbReference type="SMART" id="SM00184">
    <property type="entry name" value="RING"/>
    <property type="match status" value="1"/>
</dbReference>
<dbReference type="SUPFAM" id="SSF57850">
    <property type="entry name" value="RING/U-box"/>
    <property type="match status" value="1"/>
</dbReference>
<dbReference type="PROSITE" id="PS00518">
    <property type="entry name" value="ZF_RING_1"/>
    <property type="match status" value="1"/>
</dbReference>
<dbReference type="PROSITE" id="PS50089">
    <property type="entry name" value="ZF_RING_2"/>
    <property type="match status" value="1"/>
</dbReference>
<feature type="chain" id="PRO_0000296628" description="Polycomb complex protein BMI-1">
    <location>
        <begin position="1"/>
        <end position="326"/>
    </location>
</feature>
<feature type="zinc finger region" description="RING-type" evidence="5">
    <location>
        <begin position="18"/>
        <end position="57"/>
    </location>
</feature>
<feature type="region of interest" description="Interaction with PHC2" evidence="3">
    <location>
        <begin position="162"/>
        <end position="182"/>
    </location>
</feature>
<feature type="region of interest" description="Interaction with E4F1" evidence="3">
    <location>
        <begin position="164"/>
        <end position="228"/>
    </location>
</feature>
<feature type="region of interest" description="Disordered" evidence="6">
    <location>
        <begin position="236"/>
        <end position="326"/>
    </location>
</feature>
<feature type="short sequence motif" description="Nuclear localization signal" evidence="4">
    <location>
        <begin position="81"/>
        <end position="95"/>
    </location>
</feature>
<feature type="compositionally biased region" description="Low complexity" evidence="6">
    <location>
        <begin position="266"/>
        <end position="278"/>
    </location>
</feature>
<feature type="compositionally biased region" description="Polar residues" evidence="6">
    <location>
        <begin position="279"/>
        <end position="309"/>
    </location>
</feature>
<feature type="compositionally biased region" description="Low complexity" evidence="6">
    <location>
        <begin position="315"/>
        <end position="326"/>
    </location>
</feature>
<accession>Q5R8L2</accession>
<gene>
    <name type="primary">BMI1</name>
    <name type="synonym">PCGF4</name>
</gene>